<sequence>MILKEEHPHQSIETAANAARQAQVRWRMAHLKALSRTRTPAHGNCCGRVVSKNHFFKHSRAFLWFLLCNLVMNADAFAHSQLLINVQNQGGEVIQESITSNIGEDLITLEFQKTDGTLITQVIDFRNEVQILKALVLGEEERGQSQYQVMCFATKFNKGDFISSAAMAKLRQKNPHTIRTPEEDKGRETFTMSSWVQLNRSLPITRHLQGLCAEAMDATYVRDVDLKAWAELPGSSISSLEAATEKFPDTLSTRCNEVSSLWAPCLCNLETCIGWYPCGLKYCKGKGVAGADSSGAQQQAQPTNYRCGIKTCRKCTQFTYYVRQKQQCLWDEXRRGELQLMQMRCARRRNGSEFGDDASATCPGGETRAATTTATITGGGAGGSGKDTTAATTTTTNKLRQLLLLVQQQMPFALWSFPVHHISQSHHQSQSQHKPSRQQKQHQHHSQVAPTSHHQSSSSTPPTPSTSSSPPSSSSSSSSSAMAAIVA</sequence>
<name>OAF_DROME</name>
<evidence type="ECO:0000256" key="1">
    <source>
        <dbReference type="SAM" id="MobiDB-lite"/>
    </source>
</evidence>
<evidence type="ECO:0000269" key="2">
    <source>
    </source>
</evidence>
<evidence type="ECO:0000305" key="3"/>
<organism>
    <name type="scientific">Drosophila melanogaster</name>
    <name type="common">Fruit fly</name>
    <dbReference type="NCBI Taxonomy" id="7227"/>
    <lineage>
        <taxon>Eukaryota</taxon>
        <taxon>Metazoa</taxon>
        <taxon>Ecdysozoa</taxon>
        <taxon>Arthropoda</taxon>
        <taxon>Hexapoda</taxon>
        <taxon>Insecta</taxon>
        <taxon>Pterygota</taxon>
        <taxon>Neoptera</taxon>
        <taxon>Endopterygota</taxon>
        <taxon>Diptera</taxon>
        <taxon>Brachycera</taxon>
        <taxon>Muscomorpha</taxon>
        <taxon>Ephydroidea</taxon>
        <taxon>Drosophilidae</taxon>
        <taxon>Drosophila</taxon>
        <taxon>Sophophora</taxon>
    </lineage>
</organism>
<feature type="chain" id="PRO_0000021871" description="Out at first protein">
    <location>
        <begin position="1"/>
        <end position="487"/>
    </location>
</feature>
<feature type="chain" id="PRO_0000021872" description="Out at first short protein">
    <location>
        <begin position="1"/>
        <end position="332"/>
    </location>
</feature>
<feature type="region of interest" description="Disordered" evidence="1">
    <location>
        <begin position="423"/>
        <end position="487"/>
    </location>
</feature>
<feature type="compositionally biased region" description="Low complexity" evidence="1">
    <location>
        <begin position="423"/>
        <end position="433"/>
    </location>
</feature>
<feature type="compositionally biased region" description="Basic residues" evidence="1">
    <location>
        <begin position="434"/>
        <end position="445"/>
    </location>
</feature>
<feature type="compositionally biased region" description="Low complexity" evidence="1">
    <location>
        <begin position="456"/>
        <end position="480"/>
    </location>
</feature>
<feature type="sequence conflict" description="In Ref. 1; AAC37219." evidence="3" ref="1">
    <original>A</original>
    <variation>G</variation>
    <location>
        <position position="391"/>
    </location>
</feature>
<feature type="sequence conflict" description="In Ref. 1; AAC37219." evidence="3" ref="1">
    <original>R</original>
    <variation>H</variation>
    <location>
        <position position="400"/>
    </location>
</feature>
<feature type="sequence conflict" description="In Ref. 1; AAC37219." evidence="3" ref="1">
    <original>A</original>
    <variation>T</variation>
    <location>
        <position position="413"/>
    </location>
</feature>
<accession>Q9NLA6</accession>
<accession>Q24556</accession>
<accession>Q86CS3</accession>
<gene>
    <name type="primary">oaf</name>
    <name type="ORF">CG9884</name>
</gene>
<reference key="1">
    <citation type="journal article" date="1995" name="Genetics">
        <title>Regulatory autonomy and molecular characterization of the Drosophila out at first gene.</title>
        <authorList>
            <person name="Bergstrom D.E."/>
            <person name="Merli C.A."/>
            <person name="Cygan J.A."/>
            <person name="Shelby R."/>
            <person name="Blackman R.K."/>
        </authorList>
    </citation>
    <scope>NUCLEOTIDE SEQUENCE [MRNA]</scope>
    <scope>CHARACTERIZATION</scope>
    <source>
        <strain>Berkeley</strain>
        <tissue>Embryo</tissue>
    </source>
</reference>
<reference key="2">
    <citation type="journal article" date="2000" name="Science">
        <title>The genome sequence of Drosophila melanogaster.</title>
        <authorList>
            <person name="Adams M.D."/>
            <person name="Celniker S.E."/>
            <person name="Holt R.A."/>
            <person name="Evans C.A."/>
            <person name="Gocayne J.D."/>
            <person name="Amanatides P.G."/>
            <person name="Scherer S.E."/>
            <person name="Li P.W."/>
            <person name="Hoskins R.A."/>
            <person name="Galle R.F."/>
            <person name="George R.A."/>
            <person name="Lewis S.E."/>
            <person name="Richards S."/>
            <person name="Ashburner M."/>
            <person name="Henderson S.N."/>
            <person name="Sutton G.G."/>
            <person name="Wortman J.R."/>
            <person name="Yandell M.D."/>
            <person name="Zhang Q."/>
            <person name="Chen L.X."/>
            <person name="Brandon R.C."/>
            <person name="Rogers Y.-H.C."/>
            <person name="Blazej R.G."/>
            <person name="Champe M."/>
            <person name="Pfeiffer B.D."/>
            <person name="Wan K.H."/>
            <person name="Doyle C."/>
            <person name="Baxter E.G."/>
            <person name="Helt G."/>
            <person name="Nelson C.R."/>
            <person name="Miklos G.L.G."/>
            <person name="Abril J.F."/>
            <person name="Agbayani A."/>
            <person name="An H.-J."/>
            <person name="Andrews-Pfannkoch C."/>
            <person name="Baldwin D."/>
            <person name="Ballew R.M."/>
            <person name="Basu A."/>
            <person name="Baxendale J."/>
            <person name="Bayraktaroglu L."/>
            <person name="Beasley E.M."/>
            <person name="Beeson K.Y."/>
            <person name="Benos P.V."/>
            <person name="Berman B.P."/>
            <person name="Bhandari D."/>
            <person name="Bolshakov S."/>
            <person name="Borkova D."/>
            <person name="Botchan M.R."/>
            <person name="Bouck J."/>
            <person name="Brokstein P."/>
            <person name="Brottier P."/>
            <person name="Burtis K.C."/>
            <person name="Busam D.A."/>
            <person name="Butler H."/>
            <person name="Cadieu E."/>
            <person name="Center A."/>
            <person name="Chandra I."/>
            <person name="Cherry J.M."/>
            <person name="Cawley S."/>
            <person name="Dahlke C."/>
            <person name="Davenport L.B."/>
            <person name="Davies P."/>
            <person name="de Pablos B."/>
            <person name="Delcher A."/>
            <person name="Deng Z."/>
            <person name="Mays A.D."/>
            <person name="Dew I."/>
            <person name="Dietz S.M."/>
            <person name="Dodson K."/>
            <person name="Doup L.E."/>
            <person name="Downes M."/>
            <person name="Dugan-Rocha S."/>
            <person name="Dunkov B.C."/>
            <person name="Dunn P."/>
            <person name="Durbin K.J."/>
            <person name="Evangelista C.C."/>
            <person name="Ferraz C."/>
            <person name="Ferriera S."/>
            <person name="Fleischmann W."/>
            <person name="Fosler C."/>
            <person name="Gabrielian A.E."/>
            <person name="Garg N.S."/>
            <person name="Gelbart W.M."/>
            <person name="Glasser K."/>
            <person name="Glodek A."/>
            <person name="Gong F."/>
            <person name="Gorrell J.H."/>
            <person name="Gu Z."/>
            <person name="Guan P."/>
            <person name="Harris M."/>
            <person name="Harris N.L."/>
            <person name="Harvey D.A."/>
            <person name="Heiman T.J."/>
            <person name="Hernandez J.R."/>
            <person name="Houck J."/>
            <person name="Hostin D."/>
            <person name="Houston K.A."/>
            <person name="Howland T.J."/>
            <person name="Wei M.-H."/>
            <person name="Ibegwam C."/>
            <person name="Jalali M."/>
            <person name="Kalush F."/>
            <person name="Karpen G.H."/>
            <person name="Ke Z."/>
            <person name="Kennison J.A."/>
            <person name="Ketchum K.A."/>
            <person name="Kimmel B.E."/>
            <person name="Kodira C.D."/>
            <person name="Kraft C.L."/>
            <person name="Kravitz S."/>
            <person name="Kulp D."/>
            <person name="Lai Z."/>
            <person name="Lasko P."/>
            <person name="Lei Y."/>
            <person name="Levitsky A.A."/>
            <person name="Li J.H."/>
            <person name="Li Z."/>
            <person name="Liang Y."/>
            <person name="Lin X."/>
            <person name="Liu X."/>
            <person name="Mattei B."/>
            <person name="McIntosh T.C."/>
            <person name="McLeod M.P."/>
            <person name="McPherson D."/>
            <person name="Merkulov G."/>
            <person name="Milshina N.V."/>
            <person name="Mobarry C."/>
            <person name="Morris J."/>
            <person name="Moshrefi A."/>
            <person name="Mount S.M."/>
            <person name="Moy M."/>
            <person name="Murphy B."/>
            <person name="Murphy L."/>
            <person name="Muzny D.M."/>
            <person name="Nelson D.L."/>
            <person name="Nelson D.R."/>
            <person name="Nelson K.A."/>
            <person name="Nixon K."/>
            <person name="Nusskern D.R."/>
            <person name="Pacleb J.M."/>
            <person name="Palazzolo M."/>
            <person name="Pittman G.S."/>
            <person name="Pan S."/>
            <person name="Pollard J."/>
            <person name="Puri V."/>
            <person name="Reese M.G."/>
            <person name="Reinert K."/>
            <person name="Remington K."/>
            <person name="Saunders R.D.C."/>
            <person name="Scheeler F."/>
            <person name="Shen H."/>
            <person name="Shue B.C."/>
            <person name="Siden-Kiamos I."/>
            <person name="Simpson M."/>
            <person name="Skupski M.P."/>
            <person name="Smith T.J."/>
            <person name="Spier E."/>
            <person name="Spradling A.C."/>
            <person name="Stapleton M."/>
            <person name="Strong R."/>
            <person name="Sun E."/>
            <person name="Svirskas R."/>
            <person name="Tector C."/>
            <person name="Turner R."/>
            <person name="Venter E."/>
            <person name="Wang A.H."/>
            <person name="Wang X."/>
            <person name="Wang Z.-Y."/>
            <person name="Wassarman D.A."/>
            <person name="Weinstock G.M."/>
            <person name="Weissenbach J."/>
            <person name="Williams S.M."/>
            <person name="Woodage T."/>
            <person name="Worley K.C."/>
            <person name="Wu D."/>
            <person name="Yang S."/>
            <person name="Yao Q.A."/>
            <person name="Ye J."/>
            <person name="Yeh R.-F."/>
            <person name="Zaveri J.S."/>
            <person name="Zhan M."/>
            <person name="Zhang G."/>
            <person name="Zhao Q."/>
            <person name="Zheng L."/>
            <person name="Zheng X.H."/>
            <person name="Zhong F.N."/>
            <person name="Zhong W."/>
            <person name="Zhou X."/>
            <person name="Zhu S.C."/>
            <person name="Zhu X."/>
            <person name="Smith H.O."/>
            <person name="Gibbs R.A."/>
            <person name="Myers E.W."/>
            <person name="Rubin G.M."/>
            <person name="Venter J.C."/>
        </authorList>
    </citation>
    <scope>NUCLEOTIDE SEQUENCE [LARGE SCALE GENOMIC DNA]</scope>
    <source>
        <strain>Berkeley</strain>
    </source>
</reference>
<reference key="3">
    <citation type="journal article" date="2002" name="Genome Biol.">
        <title>Annotation of the Drosophila melanogaster euchromatic genome: a systematic review.</title>
        <authorList>
            <person name="Misra S."/>
            <person name="Crosby M.A."/>
            <person name="Mungall C.J."/>
            <person name="Matthews B.B."/>
            <person name="Campbell K.S."/>
            <person name="Hradecky P."/>
            <person name="Huang Y."/>
            <person name="Kaminker J.S."/>
            <person name="Millburn G.H."/>
            <person name="Prochnik S.E."/>
            <person name="Smith C.D."/>
            <person name="Tupy J.L."/>
            <person name="Whitfield E.J."/>
            <person name="Bayraktaroglu L."/>
            <person name="Berman B.P."/>
            <person name="Bettencourt B.R."/>
            <person name="Celniker S.E."/>
            <person name="de Grey A.D.N.J."/>
            <person name="Drysdale R.A."/>
            <person name="Harris N.L."/>
            <person name="Richter J."/>
            <person name="Russo S."/>
            <person name="Schroeder A.J."/>
            <person name="Shu S.Q."/>
            <person name="Stapleton M."/>
            <person name="Yamada C."/>
            <person name="Ashburner M."/>
            <person name="Gelbart W.M."/>
            <person name="Rubin G.M."/>
            <person name="Lewis S.E."/>
        </authorList>
    </citation>
    <scope>GENOME REANNOTATION</scope>
    <source>
        <strain>Berkeley</strain>
    </source>
</reference>
<reference key="4">
    <citation type="journal article" date="1996" name="Genes Dev.">
        <title>Promoter specificity mediates the independent regulation of neighboring genes.</title>
        <authorList>
            <person name="Merli C."/>
            <person name="Bergstrom D.E."/>
            <person name="Cygan J.A."/>
            <person name="Blackman R.K."/>
        </authorList>
    </citation>
    <scope>NUCLEOTIDE SEQUENCE [GENOMIC DNA] OF 1-89</scope>
    <scope>TISSUE SPECIFICITY</scope>
    <source>
        <strain>Oregon-R</strain>
    </source>
</reference>
<dbReference type="EMBL" id="L31349">
    <property type="protein sequence ID" value="AAC37219.2"/>
    <property type="molecule type" value="mRNA"/>
</dbReference>
<dbReference type="EMBL" id="AE014134">
    <property type="protein sequence ID" value="AAF51246.1"/>
    <property type="molecule type" value="Genomic_DNA"/>
</dbReference>
<dbReference type="EMBL" id="AE014134">
    <property type="protein sequence ID" value="AAO41163.2"/>
    <property type="molecule type" value="Genomic_DNA"/>
</dbReference>
<dbReference type="EMBL" id="U63852">
    <property type="protein sequence ID" value="AAC47551.1"/>
    <property type="molecule type" value="Genomic_DNA"/>
</dbReference>
<dbReference type="PIR" id="S55016">
    <property type="entry name" value="S55016"/>
</dbReference>
<dbReference type="RefSeq" id="NP_477040.1">
    <property type="nucleotide sequence ID" value="NM_057692.2"/>
</dbReference>
<dbReference type="RefSeq" id="NP_722815.1">
    <property type="nucleotide sequence ID" value="NM_164489.2"/>
</dbReference>
<dbReference type="RefSeq" id="NP_722816.1">
    <property type="nucleotide sequence ID" value="NM_164490.1"/>
</dbReference>
<dbReference type="RefSeq" id="NP_787963.2">
    <property type="nucleotide sequence ID" value="NM_175949.1"/>
</dbReference>
<dbReference type="BioGRID" id="59662">
    <property type="interactions" value="1"/>
</dbReference>
<dbReference type="FunCoup" id="Q9NLA6">
    <property type="interactions" value="187"/>
</dbReference>
<dbReference type="STRING" id="7227.FBpp0077459"/>
<dbReference type="GlyGen" id="Q9NLA6">
    <property type="glycosylation" value="2 sites"/>
</dbReference>
<dbReference type="PaxDb" id="7227-FBpp0077456"/>
<dbReference type="DNASU" id="33435"/>
<dbReference type="EnsemblMetazoa" id="FBtr0077780">
    <property type="protein sequence ID" value="FBpp0077459"/>
    <property type="gene ID" value="FBgn0011818"/>
</dbReference>
<dbReference type="GeneID" id="33435"/>
<dbReference type="KEGG" id="dme:Dmel_CG9884"/>
<dbReference type="AGR" id="FB:FBgn0011818"/>
<dbReference type="CTD" id="220323"/>
<dbReference type="FlyBase" id="FBgn0011818">
    <property type="gene designation" value="oaf"/>
</dbReference>
<dbReference type="VEuPathDB" id="VectorBase:FBgn0011818"/>
<dbReference type="eggNOG" id="ENOG502QWDA">
    <property type="taxonomic scope" value="Eukaryota"/>
</dbReference>
<dbReference type="GeneTree" id="ENSGT00390000012008"/>
<dbReference type="InParanoid" id="Q9NLA6"/>
<dbReference type="OMA" id="CHYGLSL"/>
<dbReference type="OrthoDB" id="5947176at2759"/>
<dbReference type="PhylomeDB" id="Q9NLA6"/>
<dbReference type="BioGRID-ORCS" id="33435">
    <property type="hits" value="0 hits in 1 CRISPR screen"/>
</dbReference>
<dbReference type="ChiTaRS" id="oaf">
    <property type="organism name" value="fly"/>
</dbReference>
<dbReference type="GenomeRNAi" id="33435"/>
<dbReference type="PRO" id="PR:Q9NLA6"/>
<dbReference type="Proteomes" id="UP000000803">
    <property type="component" value="Chromosome 2L"/>
</dbReference>
<dbReference type="Bgee" id="FBgn0011818">
    <property type="expression patterns" value="Expressed in distal medullary amacrine neuron Dm8 (Drosophila) in insect head and 254 other cell types or tissues"/>
</dbReference>
<dbReference type="ExpressionAtlas" id="Q9NLA6">
    <property type="expression patterns" value="baseline and differential"/>
</dbReference>
<dbReference type="InterPro" id="IPR026315">
    <property type="entry name" value="Oaf"/>
</dbReference>
<dbReference type="InterPro" id="IPR053897">
    <property type="entry name" value="Oaf_C"/>
</dbReference>
<dbReference type="InterPro" id="IPR053894">
    <property type="entry name" value="OAF_N"/>
</dbReference>
<dbReference type="PANTHER" id="PTHR13423">
    <property type="entry name" value="OUT AT FIRST"/>
    <property type="match status" value="1"/>
</dbReference>
<dbReference type="PANTHER" id="PTHR13423:SF2">
    <property type="entry name" value="OUT AT FIRST PROTEIN HOMOLOG"/>
    <property type="match status" value="1"/>
</dbReference>
<dbReference type="Pfam" id="PF22873">
    <property type="entry name" value="OAF_C"/>
    <property type="match status" value="1"/>
</dbReference>
<dbReference type="Pfam" id="PF14941">
    <property type="entry name" value="OAF_N"/>
    <property type="match status" value="1"/>
</dbReference>
<protein>
    <recommendedName>
        <fullName>Out at first protein</fullName>
    </recommendedName>
    <component>
        <recommendedName>
            <fullName>Out at first short protein</fullName>
        </recommendedName>
    </component>
</protein>
<keyword id="KW-0217">Developmental protein</keyword>
<keyword id="KW-1185">Reference proteome</keyword>
<proteinExistence type="evidence at protein level"/>
<comment type="function">
    <text>Vital for proper neuronal development and hatching.</text>
</comment>
<comment type="tissue specificity">
    <text evidence="2">Embryonic expression is in small clusters of cells along posterior margin of most segments, brain and segmentally repeating pattern along midline of nerve cord. Expressed in embryonic, larval and adult gonads of both sexes, and larval imaginal disks.</text>
</comment>
<comment type="developmental stage">
    <text>Expressed both maternally and zygotically throughout development with highest levels in pupae and adults.</text>
</comment>
<comment type="miscellaneous">
    <text>Readthrough of the terminator UGA may occur between the codons for 332-Glu and 334-Arg.</text>
</comment>
<comment type="similarity">
    <text evidence="3">Belongs to the OAF family.</text>
</comment>